<accession>Q5XIJ4</accession>
<comment type="function">
    <text evidence="1">May play a role in the structure and strength of both muscle and bone.</text>
</comment>
<comment type="subunit">
    <text evidence="2">Interacts with ATAD3A.</text>
</comment>
<comment type="subcellular location">
    <subcellularLocation>
        <location evidence="3">Membrane</location>
        <topology evidence="3">Single-pass membrane protein</topology>
    </subcellularLocation>
    <subcellularLocation>
        <location evidence="1">Mitochondrion</location>
    </subcellularLocation>
    <subcellularLocation>
        <location evidence="1">Cytoplasm</location>
    </subcellularLocation>
</comment>
<comment type="similarity">
    <text evidence="5">Belongs to the FAM210 family.</text>
</comment>
<reference key="1">
    <citation type="journal article" date="2004" name="Genome Res.">
        <title>The status, quality, and expansion of the NIH full-length cDNA project: the Mammalian Gene Collection (MGC).</title>
        <authorList>
            <consortium name="The MGC Project Team"/>
        </authorList>
    </citation>
    <scope>NUCLEOTIDE SEQUENCE [LARGE SCALE MRNA]</scope>
    <source>
        <tissue>Heart</tissue>
    </source>
</reference>
<sequence length="273" mass="31474">MQWNVPRTMSRLALRTFLEAQKARLFDHHRSTKGLLLVHRGEYRVAWTPHLRKQWLHLSAVQCLAKQRNLLDAQPPQRGALPQGRWEQDILSKRVLSSSSTSQETPSEKKEEPDPLQDKSISLYQRFKKTFRQYGKVLIPVHLITSGIWFGTFYYASIKGVNVIPFLEFLGLPDSVVDILKNSQSGNALTAYAMFKIATPARYTVTLGGTSFTVKYLRSHGYMSTPPPVKEYLQGRMEETKELISEKMEETKDRLTEKLQETKEKVSFKKKVE</sequence>
<proteinExistence type="evidence at transcript level"/>
<name>F210A_RAT</name>
<gene>
    <name type="primary">Fam210a</name>
</gene>
<feature type="chain" id="PRO_0000274427" description="Protein FAM210A">
    <location>
        <begin position="1"/>
        <end position="273"/>
    </location>
</feature>
<feature type="transmembrane region" description="Helical" evidence="3">
    <location>
        <begin position="138"/>
        <end position="158"/>
    </location>
</feature>
<feature type="domain" description="DUF1279">
    <location>
        <begin position="118"/>
        <end position="230"/>
    </location>
</feature>
<feature type="region of interest" description="Disordered" evidence="4">
    <location>
        <begin position="95"/>
        <end position="116"/>
    </location>
</feature>
<feature type="region of interest" description="Disordered" evidence="4">
    <location>
        <begin position="247"/>
        <end position="273"/>
    </location>
</feature>
<feature type="coiled-coil region" evidence="3">
    <location>
        <begin position="233"/>
        <end position="272"/>
    </location>
</feature>
<feature type="compositionally biased region" description="Basic and acidic residues" evidence="4">
    <location>
        <begin position="106"/>
        <end position="116"/>
    </location>
</feature>
<dbReference type="EMBL" id="BC083687">
    <property type="protein sequence ID" value="AAH83687.1"/>
    <property type="molecule type" value="mRNA"/>
</dbReference>
<dbReference type="RefSeq" id="NP_001007689.1">
    <property type="nucleotide sequence ID" value="NM_001007688.4"/>
</dbReference>
<dbReference type="RefSeq" id="XP_063133380.1">
    <property type="nucleotide sequence ID" value="XM_063277310.1"/>
</dbReference>
<dbReference type="FunCoup" id="Q5XIJ4">
    <property type="interactions" value="1111"/>
</dbReference>
<dbReference type="STRING" id="10116.ENSRNOP00000071956"/>
<dbReference type="PhosphoSitePlus" id="Q5XIJ4"/>
<dbReference type="SwissPalm" id="Q5XIJ4"/>
<dbReference type="PaxDb" id="10116-ENSRNOP00000022519"/>
<dbReference type="Ensembl" id="ENSRNOT00000022519.6">
    <property type="protein sequence ID" value="ENSRNOP00000022519.3"/>
    <property type="gene ID" value="ENSRNOG00000068859.1"/>
</dbReference>
<dbReference type="GeneID" id="307343"/>
<dbReference type="KEGG" id="rno:307343"/>
<dbReference type="AGR" id="RGD:1359600"/>
<dbReference type="CTD" id="125228"/>
<dbReference type="RGD" id="1359600">
    <property type="gene designation" value="Fam210a"/>
</dbReference>
<dbReference type="eggNOG" id="KOG4082">
    <property type="taxonomic scope" value="Eukaryota"/>
</dbReference>
<dbReference type="GeneTree" id="ENSGT00940000156554"/>
<dbReference type="InParanoid" id="Q5XIJ4"/>
<dbReference type="OMA" id="MQWNVLR"/>
<dbReference type="OrthoDB" id="5874039at2759"/>
<dbReference type="PhylomeDB" id="Q5XIJ4"/>
<dbReference type="TreeFam" id="TF313283"/>
<dbReference type="PRO" id="PR:Q5XIJ4"/>
<dbReference type="Proteomes" id="UP000002494">
    <property type="component" value="Chromosome 18"/>
</dbReference>
<dbReference type="Bgee" id="ENSRNOG00000016740">
    <property type="expression patterns" value="Expressed in heart and 19 other cell types or tissues"/>
</dbReference>
<dbReference type="GO" id="GO:0005737">
    <property type="term" value="C:cytoplasm"/>
    <property type="evidence" value="ECO:0000250"/>
    <property type="project" value="UniProtKB"/>
</dbReference>
<dbReference type="GO" id="GO:0016020">
    <property type="term" value="C:membrane"/>
    <property type="evidence" value="ECO:0007669"/>
    <property type="project" value="UniProtKB-SubCell"/>
</dbReference>
<dbReference type="GO" id="GO:0005739">
    <property type="term" value="C:mitochondrion"/>
    <property type="evidence" value="ECO:0000250"/>
    <property type="project" value="UniProtKB"/>
</dbReference>
<dbReference type="Gene3D" id="6.10.140.1430">
    <property type="match status" value="1"/>
</dbReference>
<dbReference type="InterPro" id="IPR045866">
    <property type="entry name" value="FAM210A/B-like"/>
</dbReference>
<dbReference type="InterPro" id="IPR009688">
    <property type="entry name" value="FAM210A/B-like_dom"/>
</dbReference>
<dbReference type="PANTHER" id="PTHR21377:SF1">
    <property type="entry name" value="PROTEIN FAM210A"/>
    <property type="match status" value="1"/>
</dbReference>
<dbReference type="PANTHER" id="PTHR21377">
    <property type="entry name" value="PROTEIN FAM210B, MITOCHONDRIAL"/>
    <property type="match status" value="1"/>
</dbReference>
<dbReference type="Pfam" id="PF06916">
    <property type="entry name" value="FAM210A-B_dom"/>
    <property type="match status" value="1"/>
</dbReference>
<keyword id="KW-0175">Coiled coil</keyword>
<keyword id="KW-0963">Cytoplasm</keyword>
<keyword id="KW-0472">Membrane</keyword>
<keyword id="KW-0496">Mitochondrion</keyword>
<keyword id="KW-1185">Reference proteome</keyword>
<keyword id="KW-0812">Transmembrane</keyword>
<keyword id="KW-1133">Transmembrane helix</keyword>
<protein>
    <recommendedName>
        <fullName>Protein FAM210A</fullName>
    </recommendedName>
</protein>
<organism>
    <name type="scientific">Rattus norvegicus</name>
    <name type="common">Rat</name>
    <dbReference type="NCBI Taxonomy" id="10116"/>
    <lineage>
        <taxon>Eukaryota</taxon>
        <taxon>Metazoa</taxon>
        <taxon>Chordata</taxon>
        <taxon>Craniata</taxon>
        <taxon>Vertebrata</taxon>
        <taxon>Euteleostomi</taxon>
        <taxon>Mammalia</taxon>
        <taxon>Eutheria</taxon>
        <taxon>Euarchontoglires</taxon>
        <taxon>Glires</taxon>
        <taxon>Rodentia</taxon>
        <taxon>Myomorpha</taxon>
        <taxon>Muroidea</taxon>
        <taxon>Muridae</taxon>
        <taxon>Murinae</taxon>
        <taxon>Rattus</taxon>
    </lineage>
</organism>
<evidence type="ECO:0000250" key="1">
    <source>
        <dbReference type="UniProtKB" id="Q8BGY7"/>
    </source>
</evidence>
<evidence type="ECO:0000250" key="2">
    <source>
        <dbReference type="UniProtKB" id="Q96ND0"/>
    </source>
</evidence>
<evidence type="ECO:0000255" key="3"/>
<evidence type="ECO:0000256" key="4">
    <source>
        <dbReference type="SAM" id="MobiDB-lite"/>
    </source>
</evidence>
<evidence type="ECO:0000305" key="5"/>